<gene>
    <name type="primary">L2HGDH</name>
</gene>
<name>L2HDH_PONAB</name>
<keyword id="KW-0007">Acetylation</keyword>
<keyword id="KW-0274">FAD</keyword>
<keyword id="KW-0285">Flavoprotein</keyword>
<keyword id="KW-0496">Mitochondrion</keyword>
<keyword id="KW-0560">Oxidoreductase</keyword>
<keyword id="KW-1185">Reference proteome</keyword>
<keyword id="KW-0809">Transit peptide</keyword>
<reference key="1">
    <citation type="submission" date="2004-11" db="EMBL/GenBank/DDBJ databases">
        <authorList>
            <consortium name="The German cDNA consortium"/>
        </authorList>
    </citation>
    <scope>NUCLEOTIDE SEQUENCE [LARGE SCALE MRNA]</scope>
    <source>
        <tissue>Kidney</tissue>
    </source>
</reference>
<feature type="transit peptide" description="Mitochondrion" evidence="3">
    <location>
        <begin position="1"/>
        <end position="51"/>
    </location>
</feature>
<feature type="chain" id="PRO_0000228131" description="L-2-hydroxyglutarate dehydrogenase, mitochondrial">
    <location>
        <begin position="52"/>
        <end position="419"/>
    </location>
</feature>
<feature type="modified residue" description="N6-acetyllysine" evidence="2">
    <location>
        <position position="104"/>
    </location>
</feature>
<feature type="modified residue" description="N6-acetyllysine" evidence="2">
    <location>
        <position position="173"/>
    </location>
</feature>
<dbReference type="EC" id="1.1.99.2"/>
<dbReference type="EMBL" id="CR859349">
    <property type="protein sequence ID" value="CAH91523.1"/>
    <property type="molecule type" value="mRNA"/>
</dbReference>
<dbReference type="RefSeq" id="NP_001125894.1">
    <property type="nucleotide sequence ID" value="NM_001132422.2"/>
</dbReference>
<dbReference type="SMR" id="Q5R9N7"/>
<dbReference type="FunCoup" id="Q5R9N7">
    <property type="interactions" value="1391"/>
</dbReference>
<dbReference type="STRING" id="9601.ENSPPYP00000006590"/>
<dbReference type="GeneID" id="100172827"/>
<dbReference type="KEGG" id="pon:100172827"/>
<dbReference type="CTD" id="79944"/>
<dbReference type="InParanoid" id="Q5R9N7"/>
<dbReference type="OrthoDB" id="498204at2759"/>
<dbReference type="Proteomes" id="UP000001595">
    <property type="component" value="Unplaced"/>
</dbReference>
<dbReference type="GO" id="GO:0005739">
    <property type="term" value="C:mitochondrion"/>
    <property type="evidence" value="ECO:0007669"/>
    <property type="project" value="UniProtKB-SubCell"/>
</dbReference>
<dbReference type="GO" id="GO:0047545">
    <property type="term" value="F:2-hydroxyglutarate dehydrogenase activity"/>
    <property type="evidence" value="ECO:0007669"/>
    <property type="project" value="UniProtKB-EC"/>
</dbReference>
<dbReference type="Gene3D" id="3.30.9.10">
    <property type="entry name" value="D-Amino Acid Oxidase, subunit A, domain 2"/>
    <property type="match status" value="1"/>
</dbReference>
<dbReference type="Gene3D" id="3.50.50.60">
    <property type="entry name" value="FAD/NAD(P)-binding domain"/>
    <property type="match status" value="1"/>
</dbReference>
<dbReference type="InterPro" id="IPR006076">
    <property type="entry name" value="FAD-dep_OxRdtase"/>
</dbReference>
<dbReference type="InterPro" id="IPR036188">
    <property type="entry name" value="FAD/NAD-bd_sf"/>
</dbReference>
<dbReference type="NCBIfam" id="NF008726">
    <property type="entry name" value="PRK11728.1"/>
    <property type="match status" value="1"/>
</dbReference>
<dbReference type="PANTHER" id="PTHR43104">
    <property type="entry name" value="L-2-HYDROXYGLUTARATE DEHYDROGENASE, MITOCHONDRIAL"/>
    <property type="match status" value="1"/>
</dbReference>
<dbReference type="PANTHER" id="PTHR43104:SF2">
    <property type="entry name" value="L-2-HYDROXYGLUTARATE DEHYDROGENASE, MITOCHONDRIAL"/>
    <property type="match status" value="1"/>
</dbReference>
<dbReference type="Pfam" id="PF01266">
    <property type="entry name" value="DAO"/>
    <property type="match status" value="1"/>
</dbReference>
<dbReference type="SUPFAM" id="SSF51905">
    <property type="entry name" value="FAD/NAD(P)-binding domain"/>
    <property type="match status" value="1"/>
</dbReference>
<protein>
    <recommendedName>
        <fullName>L-2-hydroxyglutarate dehydrogenase, mitochondrial</fullName>
        <shortName>Duranin</shortName>
        <ecNumber>1.1.99.2</ecNumber>
    </recommendedName>
</protein>
<comment type="catalytic activity">
    <reaction>
        <text>(S)-2-hydroxyglutarate + A = 2-oxoglutarate + AH2</text>
        <dbReference type="Rhea" id="RHEA:21252"/>
        <dbReference type="ChEBI" id="CHEBI:13193"/>
        <dbReference type="ChEBI" id="CHEBI:16782"/>
        <dbReference type="ChEBI" id="CHEBI:16810"/>
        <dbReference type="ChEBI" id="CHEBI:17499"/>
        <dbReference type="EC" id="1.1.99.2"/>
    </reaction>
</comment>
<comment type="cofactor">
    <cofactor evidence="1">
        <name>FAD</name>
        <dbReference type="ChEBI" id="CHEBI:57692"/>
    </cofactor>
</comment>
<comment type="subcellular location">
    <subcellularLocation>
        <location evidence="4">Mitochondrion</location>
    </subcellularLocation>
</comment>
<comment type="similarity">
    <text evidence="4">Belongs to the L2HGDH family.</text>
</comment>
<organism>
    <name type="scientific">Pongo abelii</name>
    <name type="common">Sumatran orangutan</name>
    <name type="synonym">Pongo pygmaeus abelii</name>
    <dbReference type="NCBI Taxonomy" id="9601"/>
    <lineage>
        <taxon>Eukaryota</taxon>
        <taxon>Metazoa</taxon>
        <taxon>Chordata</taxon>
        <taxon>Craniata</taxon>
        <taxon>Vertebrata</taxon>
        <taxon>Euteleostomi</taxon>
        <taxon>Mammalia</taxon>
        <taxon>Eutheria</taxon>
        <taxon>Euarchontoglires</taxon>
        <taxon>Primates</taxon>
        <taxon>Haplorrhini</taxon>
        <taxon>Catarrhini</taxon>
        <taxon>Hominidae</taxon>
        <taxon>Pongo</taxon>
    </lineage>
</organism>
<sequence length="419" mass="45538">MVPALRYLVGACGRARGGFAGDFPGASGLASGRPRPLCGGSRSASTSSFDIVIVGGGIVGLASARALILRHPSLSIGVLEKEKDLAVHQTGHNSGVIHSGIYYKPESLKAKLCVQGAALLYEYCQQKGISYKQCGKLIVAVEQEEIPRLQALYERGLQNGVQGLRLIQQDDIKKKEPYCRGLMAIDCPHTGIVDYRQVALSFAQDFQDAGGSVLTNFEVKDIEMAKESLSRSIDGMQYPIVIKNIKGEEIRCQYVVTCAGLYSDRISELSGCSPDPRIVSFRGDYLLLKPEKCYLVKGNIYPVPDSRFPFLGVHFTLRMDGSIWLGPNAVLAFKREGYRPFDFSATDVMDIIINRGPAGVRAQALDRDGNLVDDFVFDAGVGDIGNRILHVRNAPSPAATSSIAISGMIADEVQQRFEL</sequence>
<evidence type="ECO:0000250" key="1"/>
<evidence type="ECO:0000250" key="2">
    <source>
        <dbReference type="UniProtKB" id="Q91YP0"/>
    </source>
</evidence>
<evidence type="ECO:0000255" key="3"/>
<evidence type="ECO:0000305" key="4"/>
<accession>Q5R9N7</accession>
<proteinExistence type="evidence at transcript level"/>